<protein>
    <recommendedName>
        <fullName evidence="27">Retrotransposon-derived protein PEG10</fullName>
    </recommendedName>
    <alternativeName>
        <fullName evidence="1">Embryonal carcinoma differentiation-regulated protein</fullName>
    </alternativeName>
    <alternativeName>
        <fullName evidence="1">Mammalian retrotransposon-derived protein 2</fullName>
    </alternativeName>
    <alternativeName>
        <fullName evidence="26">Myelin expression factor 3-like protein 1</fullName>
        <shortName evidence="26">MEF3-like protein 1</shortName>
    </alternativeName>
    <alternativeName>
        <fullName evidence="23">Paternally expressed gene 10 protein</fullName>
    </alternativeName>
    <alternativeName>
        <fullName>Retrotransposon gag domain-containing protein 3</fullName>
    </alternativeName>
    <alternativeName>
        <fullName evidence="24">Retrotransposon-derived gag-like polyprotein</fullName>
    </alternativeName>
    <alternativeName>
        <fullName evidence="1">Ty3/Gypsy-like protein</fullName>
    </alternativeName>
</protein>
<reference key="1">
    <citation type="journal article" date="2001" name="Genomics">
        <title>A retrotransposon-derived gene, PEG10, is a novel imprinted gene located on human chromosome 7q21.</title>
        <authorList>
            <person name="Ono R."/>
            <person name="Kobayashi S."/>
            <person name="Wagatsuma H."/>
            <person name="Aisaka K."/>
            <person name="Kohda T."/>
            <person name="Kaneko-Ishino T."/>
            <person name="Ishino F."/>
        </authorList>
    </citation>
    <scope>NUCLEOTIDE SEQUENCE [MRNA]</scope>
    <scope>TISSUE SPECIFICITY</scope>
</reference>
<reference key="2">
    <citation type="submission" date="2002-09" db="EMBL/GenBank/DDBJ databases">
        <title>Isolation of MEF3 like gene 1.</title>
        <authorList>
            <person name="Satoh S."/>
            <person name="Furukawa Y."/>
        </authorList>
    </citation>
    <scope>NUCLEOTIDE SEQUENCE [MRNA]</scope>
    <source>
        <tissue>Testis</tissue>
    </source>
</reference>
<reference key="3">
    <citation type="journal article" date="1999" name="DNA Res.">
        <title>Prediction of the coding sequences of unidentified human genes. XIII. The complete sequences of 100 new cDNA clones from brain which code for large proteins in vitro.</title>
        <authorList>
            <person name="Nagase T."/>
            <person name="Ishikawa K."/>
            <person name="Suyama M."/>
            <person name="Kikuno R."/>
            <person name="Hirosawa M."/>
            <person name="Miyajima N."/>
            <person name="Tanaka A."/>
            <person name="Kotani H."/>
            <person name="Nomura N."/>
            <person name="Ohara O."/>
        </authorList>
    </citation>
    <scope>NUCLEOTIDE SEQUENCE [LARGE SCALE MRNA]</scope>
    <source>
        <tissue>Brain</tissue>
    </source>
</reference>
<reference key="4">
    <citation type="submission" date="1999-06" db="EMBL/GenBank/DDBJ databases">
        <authorList>
            <person name="Ohara O."/>
            <person name="Nagase T."/>
            <person name="Kikuno R."/>
        </authorList>
    </citation>
    <scope>SEQUENCE REVISION</scope>
</reference>
<reference key="5">
    <citation type="journal article" date="2004" name="Nat. Genet.">
        <title>Complete sequencing and characterization of 21,243 full-length human cDNAs.</title>
        <authorList>
            <person name="Ota T."/>
            <person name="Suzuki Y."/>
            <person name="Nishikawa T."/>
            <person name="Otsuki T."/>
            <person name="Sugiyama T."/>
            <person name="Irie R."/>
            <person name="Wakamatsu A."/>
            <person name="Hayashi K."/>
            <person name="Sato H."/>
            <person name="Nagai K."/>
            <person name="Kimura K."/>
            <person name="Makita H."/>
            <person name="Sekine M."/>
            <person name="Obayashi M."/>
            <person name="Nishi T."/>
            <person name="Shibahara T."/>
            <person name="Tanaka T."/>
            <person name="Ishii S."/>
            <person name="Yamamoto J."/>
            <person name="Saito K."/>
            <person name="Kawai Y."/>
            <person name="Isono Y."/>
            <person name="Nakamura Y."/>
            <person name="Nagahari K."/>
            <person name="Murakami K."/>
            <person name="Yasuda T."/>
            <person name="Iwayanagi T."/>
            <person name="Wagatsuma M."/>
            <person name="Shiratori A."/>
            <person name="Sudo H."/>
            <person name="Hosoiri T."/>
            <person name="Kaku Y."/>
            <person name="Kodaira H."/>
            <person name="Kondo H."/>
            <person name="Sugawara M."/>
            <person name="Takahashi M."/>
            <person name="Kanda K."/>
            <person name="Yokoi T."/>
            <person name="Furuya T."/>
            <person name="Kikkawa E."/>
            <person name="Omura Y."/>
            <person name="Abe K."/>
            <person name="Kamihara K."/>
            <person name="Katsuta N."/>
            <person name="Sato K."/>
            <person name="Tanikawa M."/>
            <person name="Yamazaki M."/>
            <person name="Ninomiya K."/>
            <person name="Ishibashi T."/>
            <person name="Yamashita H."/>
            <person name="Murakawa K."/>
            <person name="Fujimori K."/>
            <person name="Tanai H."/>
            <person name="Kimata M."/>
            <person name="Watanabe M."/>
            <person name="Hiraoka S."/>
            <person name="Chiba Y."/>
            <person name="Ishida S."/>
            <person name="Ono Y."/>
            <person name="Takiguchi S."/>
            <person name="Watanabe S."/>
            <person name="Yosida M."/>
            <person name="Hotuta T."/>
            <person name="Kusano J."/>
            <person name="Kanehori K."/>
            <person name="Takahashi-Fujii A."/>
            <person name="Hara H."/>
            <person name="Tanase T.-O."/>
            <person name="Nomura Y."/>
            <person name="Togiya S."/>
            <person name="Komai F."/>
            <person name="Hara R."/>
            <person name="Takeuchi K."/>
            <person name="Arita M."/>
            <person name="Imose N."/>
            <person name="Musashino K."/>
            <person name="Yuuki H."/>
            <person name="Oshima A."/>
            <person name="Sasaki N."/>
            <person name="Aotsuka S."/>
            <person name="Yoshikawa Y."/>
            <person name="Matsunawa H."/>
            <person name="Ichihara T."/>
            <person name="Shiohata N."/>
            <person name="Sano S."/>
            <person name="Moriya S."/>
            <person name="Momiyama H."/>
            <person name="Satoh N."/>
            <person name="Takami S."/>
            <person name="Terashima Y."/>
            <person name="Suzuki O."/>
            <person name="Nakagawa S."/>
            <person name="Senoh A."/>
            <person name="Mizoguchi H."/>
            <person name="Goto Y."/>
            <person name="Shimizu F."/>
            <person name="Wakebe H."/>
            <person name="Hishigaki H."/>
            <person name="Watanabe T."/>
            <person name="Sugiyama A."/>
            <person name="Takemoto M."/>
            <person name="Kawakami B."/>
            <person name="Yamazaki M."/>
            <person name="Watanabe K."/>
            <person name="Kumagai A."/>
            <person name="Itakura S."/>
            <person name="Fukuzumi Y."/>
            <person name="Fujimori Y."/>
            <person name="Komiyama M."/>
            <person name="Tashiro H."/>
            <person name="Tanigami A."/>
            <person name="Fujiwara T."/>
            <person name="Ono T."/>
            <person name="Yamada K."/>
            <person name="Fujii Y."/>
            <person name="Ozaki K."/>
            <person name="Hirao M."/>
            <person name="Ohmori Y."/>
            <person name="Kawabata A."/>
            <person name="Hikiji T."/>
            <person name="Kobatake N."/>
            <person name="Inagaki H."/>
            <person name="Ikema Y."/>
            <person name="Okamoto S."/>
            <person name="Okitani R."/>
            <person name="Kawakami T."/>
            <person name="Noguchi S."/>
            <person name="Itoh T."/>
            <person name="Shigeta K."/>
            <person name="Senba T."/>
            <person name="Matsumura K."/>
            <person name="Nakajima Y."/>
            <person name="Mizuno T."/>
            <person name="Morinaga M."/>
            <person name="Sasaki M."/>
            <person name="Togashi T."/>
            <person name="Oyama M."/>
            <person name="Hata H."/>
            <person name="Watanabe M."/>
            <person name="Komatsu T."/>
            <person name="Mizushima-Sugano J."/>
            <person name="Satoh T."/>
            <person name="Shirai Y."/>
            <person name="Takahashi Y."/>
            <person name="Nakagawa K."/>
            <person name="Okumura K."/>
            <person name="Nagase T."/>
            <person name="Nomura N."/>
            <person name="Kikuchi H."/>
            <person name="Masuho Y."/>
            <person name="Yamashita R."/>
            <person name="Nakai K."/>
            <person name="Yada T."/>
            <person name="Nakamura Y."/>
            <person name="Ohara O."/>
            <person name="Isogai T."/>
            <person name="Sugano S."/>
        </authorList>
    </citation>
    <scope>NUCLEOTIDE SEQUENCE [LARGE SCALE MRNA]</scope>
    <source>
        <tissue evidence="30">Brain</tissue>
    </source>
</reference>
<reference key="6">
    <citation type="journal article" date="2003" name="Nature">
        <title>The DNA sequence of human chromosome 7.</title>
        <authorList>
            <person name="Hillier L.W."/>
            <person name="Fulton R.S."/>
            <person name="Fulton L.A."/>
            <person name="Graves T.A."/>
            <person name="Pepin K.H."/>
            <person name="Wagner-McPherson C."/>
            <person name="Layman D."/>
            <person name="Maas J."/>
            <person name="Jaeger S."/>
            <person name="Walker R."/>
            <person name="Wylie K."/>
            <person name="Sekhon M."/>
            <person name="Becker M.C."/>
            <person name="O'Laughlin M.D."/>
            <person name="Schaller M.E."/>
            <person name="Fewell G.A."/>
            <person name="Delehaunty K.D."/>
            <person name="Miner T.L."/>
            <person name="Nash W.E."/>
            <person name="Cordes M."/>
            <person name="Du H."/>
            <person name="Sun H."/>
            <person name="Edwards J."/>
            <person name="Bradshaw-Cordum H."/>
            <person name="Ali J."/>
            <person name="Andrews S."/>
            <person name="Isak A."/>
            <person name="Vanbrunt A."/>
            <person name="Nguyen C."/>
            <person name="Du F."/>
            <person name="Lamar B."/>
            <person name="Courtney L."/>
            <person name="Kalicki J."/>
            <person name="Ozersky P."/>
            <person name="Bielicki L."/>
            <person name="Scott K."/>
            <person name="Holmes A."/>
            <person name="Harkins R."/>
            <person name="Harris A."/>
            <person name="Strong C.M."/>
            <person name="Hou S."/>
            <person name="Tomlinson C."/>
            <person name="Dauphin-Kohlberg S."/>
            <person name="Kozlowicz-Reilly A."/>
            <person name="Leonard S."/>
            <person name="Rohlfing T."/>
            <person name="Rock S.M."/>
            <person name="Tin-Wollam A.-M."/>
            <person name="Abbott A."/>
            <person name="Minx P."/>
            <person name="Maupin R."/>
            <person name="Strowmatt C."/>
            <person name="Latreille P."/>
            <person name="Miller N."/>
            <person name="Johnson D."/>
            <person name="Murray J."/>
            <person name="Woessner J.P."/>
            <person name="Wendl M.C."/>
            <person name="Yang S.-P."/>
            <person name="Schultz B.R."/>
            <person name="Wallis J.W."/>
            <person name="Spieth J."/>
            <person name="Bieri T.A."/>
            <person name="Nelson J.O."/>
            <person name="Berkowicz N."/>
            <person name="Wohldmann P.E."/>
            <person name="Cook L.L."/>
            <person name="Hickenbotham M.T."/>
            <person name="Eldred J."/>
            <person name="Williams D."/>
            <person name="Bedell J.A."/>
            <person name="Mardis E.R."/>
            <person name="Clifton S.W."/>
            <person name="Chissoe S.L."/>
            <person name="Marra M.A."/>
            <person name="Raymond C."/>
            <person name="Haugen E."/>
            <person name="Gillett W."/>
            <person name="Zhou Y."/>
            <person name="James R."/>
            <person name="Phelps K."/>
            <person name="Iadanoto S."/>
            <person name="Bubb K."/>
            <person name="Simms E."/>
            <person name="Levy R."/>
            <person name="Clendenning J."/>
            <person name="Kaul R."/>
            <person name="Kent W.J."/>
            <person name="Furey T.S."/>
            <person name="Baertsch R.A."/>
            <person name="Brent M.R."/>
            <person name="Keibler E."/>
            <person name="Flicek P."/>
            <person name="Bork P."/>
            <person name="Suyama M."/>
            <person name="Bailey J.A."/>
            <person name="Portnoy M.E."/>
            <person name="Torrents D."/>
            <person name="Chinwalla A.T."/>
            <person name="Gish W.R."/>
            <person name="Eddy S.R."/>
            <person name="McPherson J.D."/>
            <person name="Olson M.V."/>
            <person name="Eichler E.E."/>
            <person name="Green E.D."/>
            <person name="Waterston R.H."/>
            <person name="Wilson R.K."/>
        </authorList>
    </citation>
    <scope>NUCLEOTIDE SEQUENCE [LARGE SCALE GENOMIC DNA]</scope>
</reference>
<reference key="7">
    <citation type="submission" date="2005-06" db="EMBL/GenBank/DDBJ databases">
        <authorList>
            <person name="Mural R.J."/>
            <person name="Istrail S."/>
            <person name="Sutton G.G."/>
            <person name="Florea L."/>
            <person name="Halpern A.L."/>
            <person name="Mobarry C.M."/>
            <person name="Lippert R."/>
            <person name="Walenz B."/>
            <person name="Shatkay H."/>
            <person name="Dew I."/>
            <person name="Miller J.R."/>
            <person name="Flanigan M.J."/>
            <person name="Edwards N.J."/>
            <person name="Bolanos R."/>
            <person name="Fasulo D."/>
            <person name="Halldorsson B.V."/>
            <person name="Hannenhalli S."/>
            <person name="Turner R."/>
            <person name="Yooseph S."/>
            <person name="Lu F."/>
            <person name="Nusskern D.R."/>
            <person name="Shue B.C."/>
            <person name="Zheng X.H."/>
            <person name="Zhong F."/>
            <person name="Delcher A.L."/>
            <person name="Huson D.H."/>
            <person name="Kravitz S.A."/>
            <person name="Mouchard L."/>
            <person name="Reinert K."/>
            <person name="Remington K.A."/>
            <person name="Clark A.G."/>
            <person name="Waterman M.S."/>
            <person name="Eichler E.E."/>
            <person name="Adams M.D."/>
            <person name="Hunkapiller M.W."/>
            <person name="Myers E.W."/>
            <person name="Venter J.C."/>
        </authorList>
    </citation>
    <scope>NUCLEOTIDE SEQUENCE [LARGE SCALE GENOMIC DNA]</scope>
</reference>
<reference key="8">
    <citation type="journal article" date="2004" name="Genome Res.">
        <title>The status, quality, and expansion of the NIH full-length cDNA project: the Mammalian Gene Collection (MGC).</title>
        <authorList>
            <consortium name="The MGC Project Team"/>
        </authorList>
    </citation>
    <scope>NUCLEOTIDE SEQUENCE [LARGE SCALE MRNA]</scope>
    <source>
        <tissue>PNS</tissue>
    </source>
</reference>
<reference key="9">
    <citation type="journal article" date="2003" name="Biol. Reprod.">
        <title>Temporal regulation of the expression of syncytin (HERV-W), maternally imprinted PEG10, and SGCE in human placenta.</title>
        <authorList>
            <person name="Smallwood A."/>
            <person name="Papageorghiou A."/>
            <person name="Nicolaides K."/>
            <person name="Alley M.K.R."/>
            <person name="Jim A."/>
            <person name="Nargund G."/>
            <person name="Ojha K."/>
            <person name="Campbell S."/>
            <person name="Banerjee S."/>
        </authorList>
    </citation>
    <scope>DEVELOPMENTAL STAGE</scope>
</reference>
<reference key="10">
    <citation type="journal article" date="2003" name="Cancer Res.">
        <title>Involvement of PEG10 in human hepatocellular carcinogenesis through interaction with SIAH1.</title>
        <authorList>
            <person name="Okabe H."/>
            <person name="Satoh S."/>
            <person name="Furukawa Y."/>
            <person name="Kato T."/>
            <person name="Hasegawa S."/>
            <person name="Nakajima Y."/>
            <person name="Yamaoka Y."/>
            <person name="Nakamura Y."/>
        </authorList>
    </citation>
    <scope>FUNCTION</scope>
    <scope>INTERACTION WITH SIAH1 AND SIAH2</scope>
    <scope>SUBCELLULAR LOCATION</scope>
    <scope>TISSUE SPECIFICITY</scope>
</reference>
<reference key="11">
    <citation type="journal article" date="2005" name="J. Biol. Chem.">
        <title>Human retroviral gag- and gag-pol-like proteins interact with the transforming growth factor-beta receptor activin receptor-like kinase 1.</title>
        <authorList>
            <person name="Lux A."/>
            <person name="Beil C."/>
            <person name="Majety M."/>
            <person name="Barron S."/>
            <person name="Gallione C.J."/>
            <person name="Kuhn H.-M."/>
            <person name="Berg J.N."/>
            <person name="Kioschis P."/>
            <person name="Marchuk D.A."/>
            <person name="Hafner M."/>
        </authorList>
    </citation>
    <scope>FUNCTION</scope>
    <scope>INTERACTION WITH ACVRL1</scope>
    <scope>SUBCELLULAR LOCATION</scope>
    <scope>TISSUE SPECIFICITY</scope>
</reference>
<reference key="12">
    <citation type="journal article" date="2006" name="Cancer Res.">
        <title>PEG10 is a c-MYC target gene in cancer cells.</title>
        <authorList>
            <person name="Li C.-M."/>
            <person name="Margolin A.A."/>
            <person name="Salas M."/>
            <person name="Memeo L."/>
            <person name="Mansukhani M."/>
            <person name="Hibshoosh H."/>
            <person name="Szabolcs M."/>
            <person name="Klinakis A."/>
            <person name="Tycko B."/>
        </authorList>
    </citation>
    <scope>FUNCTION</scope>
    <scope>INDUCTION</scope>
    <scope>SUBCELLULAR LOCATION</scope>
    <scope>TISSUE SPECIFICITY</scope>
</reference>
<reference key="13">
    <citation type="journal article" date="2007" name="Biochim. Biophys. Acta">
        <title>Glycogen synthase kinase-3beta binds to E2F1 and regulates its transcriptional activity.</title>
        <authorList>
            <person name="Garcia-Alvarez G."/>
            <person name="Ventura V."/>
            <person name="Ros O."/>
            <person name="Aligue R."/>
            <person name="Gil J."/>
            <person name="Tauler A."/>
        </authorList>
    </citation>
    <scope>INDUCTION</scope>
</reference>
<reference key="14">
    <citation type="journal article" date="2007" name="Int. J. Cancer">
        <title>Overexpression of the paternally expressed gene 10 (PEG10) from the imprinted locus on chromosome 7q21 in high-risk B-cell chronic lymphocytic leukemia.</title>
        <authorList>
            <person name="Kainz B."/>
            <person name="Shehata M."/>
            <person name="Bilban M."/>
            <person name="Kienle D."/>
            <person name="Heintel D."/>
            <person name="Kroemer-Holzinger E."/>
            <person name="Le T."/>
            <person name="Kroeber A."/>
            <person name="Heller G."/>
            <person name="Schwarzinger I."/>
            <person name="Demirtas D."/>
            <person name="Chott A."/>
            <person name="Doehner H."/>
            <person name="Zoechbauer-Mueller S."/>
            <person name="Fonatsch C."/>
            <person name="Zielinski C."/>
            <person name="Stilgenbauer S."/>
            <person name="Gaiger A."/>
            <person name="Wagner O."/>
            <person name="Jaeger U."/>
        </authorList>
    </citation>
    <scope>SUBCELLULAR LOCATION</scope>
    <scope>TISSUE SPECIFICITY</scope>
</reference>
<reference key="15">
    <citation type="journal article" date="2007" name="J. Biol. Chem.">
        <title>Mammalian gene PEG10 expresses two reading frames by high efficiency -1 frameshifting in embryonic-associated tissues.</title>
        <authorList>
            <person name="Clark M.B."/>
            <person name="Jaenicke M."/>
            <person name="Gottesbuehren U."/>
            <person name="Kleffmann T."/>
            <person name="Legge M."/>
            <person name="Poole E.S."/>
            <person name="Tate W.P."/>
        </authorList>
    </citation>
    <scope>RIBOSOMAL FRAMESHIFT</scope>
    <scope>PROTEOLYTIC PROCESSING</scope>
    <scope>MUTAGENESIS OF ASP-370</scope>
    <scope>DEVELOPMENTAL STAGE</scope>
</reference>
<reference key="16">
    <citation type="journal article" date="2007" name="Oncogene">
        <title>Androgen activates PEG10 to promote carcinogenesis in hepatic cancer cells.</title>
        <authorList>
            <person name="Jie X."/>
            <person name="Lang C."/>
            <person name="Jian Q."/>
            <person name="Chaoqun L."/>
            <person name="Dehua Y."/>
            <person name="Yi S."/>
            <person name="Yanping J."/>
            <person name="Luokun X."/>
            <person name="Qiuping Z."/>
            <person name="Hui W."/>
            <person name="Feili G."/>
            <person name="Boquan J."/>
            <person name="Youxin J."/>
            <person name="Jinquan T."/>
        </authorList>
    </citation>
    <scope>RETRACTED PAPER</scope>
</reference>
<reference key="17">
    <citation type="journal article" date="2008" name="FEBS Lett.">
        <title>PEG10 directly regulated by E2Fs might have a role in the development of hepatocellular carcinoma.</title>
        <authorList>
            <person name="Wang C."/>
            <person name="Xiao Y."/>
            <person name="Hu Z."/>
            <person name="Chen Y."/>
            <person name="Liu N."/>
            <person name="Hu G."/>
        </authorList>
    </citation>
    <scope>INDUCTION</scope>
</reference>
<reference key="18">
    <citation type="journal article" date="2010" name="Cancer Genet. Cytogenet.">
        <title>PEG10 is a probable target for the amplification at 7q21 detected in hepatocellular carcinoma.</title>
        <authorList>
            <person name="Tsuji K."/>
            <person name="Yasui K."/>
            <person name="Gen Y."/>
            <person name="Endo M."/>
            <person name="Dohi O."/>
            <person name="Zen K."/>
            <person name="Mitsuyoshi H."/>
            <person name="Minami M."/>
            <person name="Itoh Y."/>
            <person name="Taniwaki M."/>
            <person name="Tanaka S."/>
            <person name="Arii S."/>
            <person name="Okanoue T."/>
            <person name="Yoshikawa T."/>
        </authorList>
    </citation>
    <scope>INDUCTION</scope>
</reference>
<reference key="19">
    <citation type="journal article" date="2011" name="Oncogene">
        <authorList>
            <person name="Jie X."/>
            <person name="Lang C."/>
            <person name="Jian Q."/>
            <person name="Chaoqun L."/>
            <person name="Dehua Y."/>
            <person name="Yi S."/>
            <person name="Yanping J."/>
            <person name="Luokun X."/>
            <person name="Qiuping Z."/>
            <person name="Hui W."/>
            <person name="Feili G."/>
            <person name="Boquan J."/>
            <person name="Youxin J."/>
            <person name="Jinquan T."/>
        </authorList>
    </citation>
    <scope>RETRACTION NOTICE OF PUBMED:17369855</scope>
</reference>
<reference key="20">
    <citation type="journal article" date="2008" name="Proc. Natl. Acad. Sci. U.S.A.">
        <title>A quantitative atlas of mitotic phosphorylation.</title>
        <authorList>
            <person name="Dephoure N."/>
            <person name="Zhou C."/>
            <person name="Villen J."/>
            <person name="Beausoleil S.A."/>
            <person name="Bakalarski C.E."/>
            <person name="Elledge S.J."/>
            <person name="Gygi S.P."/>
        </authorList>
    </citation>
    <scope>PHOSPHORYLATION [LARGE SCALE ANALYSIS] AT SER-316 AND SER-321 (ISOFORM 2)</scope>
    <scope>IDENTIFICATION BY MASS SPECTROMETRY [LARGE SCALE ANALYSIS]</scope>
    <source>
        <tissue>Cervix carcinoma</tissue>
    </source>
</reference>
<reference key="21">
    <citation type="journal article" date="2010" name="Sci. Signal.">
        <title>Quantitative phosphoproteomics reveals widespread full phosphorylation site occupancy during mitosis.</title>
        <authorList>
            <person name="Olsen J.V."/>
            <person name="Vermeulen M."/>
            <person name="Santamaria A."/>
            <person name="Kumar C."/>
            <person name="Miller M.L."/>
            <person name="Jensen L.J."/>
            <person name="Gnad F."/>
            <person name="Cox J."/>
            <person name="Jensen T.S."/>
            <person name="Nigg E.A."/>
            <person name="Brunak S."/>
            <person name="Mann M."/>
        </authorList>
    </citation>
    <scope>PHOSPHORYLATION [LARGE SCALE ANALYSIS] AT SER-321 (ISOFORM 2)</scope>
    <scope>IDENTIFICATION BY MASS SPECTROMETRY [LARGE SCALE ANALYSIS]</scope>
    <source>
        <tissue>Cervix carcinoma</tissue>
    </source>
</reference>
<reference key="22">
    <citation type="journal article" date="2010" name="PLoS ONE">
        <title>Genetic and molecular analyses of PEG10 reveal new aspects of genomic organization, transcription and translation.</title>
        <authorList>
            <person name="Lux H."/>
            <person name="Flammann H."/>
            <person name="Hafner M."/>
            <person name="Lux A."/>
        </authorList>
    </citation>
    <scope>ALTERNATIVE INITIATION (ISOFORMS 3 AND 4)</scope>
    <scope>USE OF A NON-AUG INITIATOR START CODON</scope>
</reference>
<reference key="23">
    <citation type="journal article" date="2011" name="BMC Syst. Biol.">
        <title>Initial characterization of the human central proteome.</title>
        <authorList>
            <person name="Burkard T.R."/>
            <person name="Planyavsky M."/>
            <person name="Kaupe I."/>
            <person name="Breitwieser F.P."/>
            <person name="Buerckstuemmer T."/>
            <person name="Bennett K.L."/>
            <person name="Superti-Furga G."/>
            <person name="Colinge J."/>
        </authorList>
    </citation>
    <scope>IDENTIFICATION BY MASS SPECTROMETRY [LARGE SCALE ANALYSIS]</scope>
</reference>
<reference key="24">
    <citation type="journal article" date="2015" name="Cell Rep.">
        <title>The Placental Gene PEG10 Promotes Progression of Neuroendocrine Prostate Cancer.</title>
        <authorList>
            <person name="Akamatsu S."/>
            <person name="Wyatt A.W."/>
            <person name="Lin D."/>
            <person name="Lysakowski S."/>
            <person name="Zhang F."/>
            <person name="Kim S."/>
            <person name="Tse C."/>
            <person name="Wang K."/>
            <person name="Mo F."/>
            <person name="Haegert A."/>
            <person name="Brahmbhatt S."/>
            <person name="Bell R."/>
            <person name="Adomat H."/>
            <person name="Kawai Y."/>
            <person name="Xue H."/>
            <person name="Dong X."/>
            <person name="Fazli L."/>
            <person name="Tsai H."/>
            <person name="Lotan T.L."/>
            <person name="Kossai M."/>
            <person name="Mosquera J.M."/>
            <person name="Rubin M.A."/>
            <person name="Beltran H."/>
            <person name="Zoubeidi A."/>
            <person name="Wang Y."/>
            <person name="Gleave M.E."/>
            <person name="Collins C.C."/>
        </authorList>
    </citation>
    <scope>FUNCTION</scope>
    <scope>INDUCTION</scope>
</reference>
<reference key="25">
    <citation type="journal article" date="2017" name="J. Exp. Clin. Cancer Res.">
        <title>PEG10 overexpression induced by E2F-1 promotes cell proliferation, migration, and invasion in pancreatic cancer.</title>
        <authorList>
            <person name="Peng Y.P."/>
            <person name="Zhu Y."/>
            <person name="Yin L.D."/>
            <person name="Zhang J.J."/>
            <person name="Wei J.S."/>
            <person name="Liu X."/>
            <person name="Liu X.C."/>
            <person name="Gao W.T."/>
            <person name="Jiang K.R."/>
            <person name="Miao Y."/>
        </authorList>
    </citation>
    <scope>FUNCTION</scope>
    <scope>INDUCTION</scope>
</reference>
<reference key="26">
    <citation type="journal article" date="2018" name="J. Mol. Cell Biol.">
        <title>Phosphorylated E2F1 is stabilized by nuclear USP11 to drive Peg10 gene expression and activate lung epithelial cells.</title>
        <authorList>
            <person name="Wang D."/>
            <person name="Zhao J."/>
            <person name="Li S."/>
            <person name="Wei J."/>
            <person name="Nan L."/>
            <person name="Mallampalli R.K."/>
            <person name="Weathington N.M."/>
            <person name="Ma H."/>
            <person name="Zhao Y."/>
        </authorList>
    </citation>
    <scope>INDUCTION</scope>
</reference>
<reference key="27">
    <citation type="journal article" date="2019" name="J. Bone Miner. Metab.">
        <title>PEG10 counteracts signaling pathways of TGF-beta and BMP to regulate growth, motility and invasion of SW1353 chondrosarcoma cells.</title>
        <authorList>
            <person name="Yahiro Y."/>
            <person name="Maeda S."/>
            <person name="Shinohara N."/>
            <person name="Jokoji G."/>
            <person name="Sakuma D."/>
            <person name="Setoguchi T."/>
            <person name="Ishidou Y."/>
            <person name="Nagano S."/>
            <person name="Komiya S."/>
            <person name="Taniguchi N."/>
        </authorList>
    </citation>
    <scope>FUNCTION</scope>
</reference>
<reference key="28">
    <citation type="journal article" date="2021" name="Science">
        <title>Mammalian retrovirus-like protein PEG10 packages its own mRNA and can be pseudotyped for mRNA delivery.</title>
        <authorList>
            <person name="Segel M."/>
            <person name="Lash B."/>
            <person name="Song J."/>
            <person name="Ladha A."/>
            <person name="Liu C.C."/>
            <person name="Jin X."/>
            <person name="Mekhedov S.L."/>
            <person name="Macrae R.K."/>
            <person name="Koonin E.V."/>
            <person name="Zhang F."/>
        </authorList>
    </citation>
    <scope>FUNCTION</scope>
    <scope>SUBCELLULAR LOCATION</scope>
    <scope>DOMAIN</scope>
    <scope>BIOTECHNOLOGY</scope>
</reference>
<reference key="29">
    <citation type="journal article" date="2022" name="Proteins">
        <title>Structural evidence that MOAP1 and PEG10 are derived from retrovirus/retrotransposon Gag proteins.</title>
        <authorList>
            <person name="Zurowska K."/>
            <person name="Alam A."/>
            <person name="Ganser-Pornillos B.K."/>
            <person name="Pornillos O."/>
        </authorList>
    </citation>
    <scope>X-RAY CRYSTALLOGRAPHY (1.90 ANGSTROMS) OF 161-252</scope>
    <scope>DOMAIN</scope>
</reference>
<name>PEG10_HUMAN</name>
<dbReference type="EMBL" id="AB049834">
    <property type="protein sequence ID" value="BAB43951.1"/>
    <property type="molecule type" value="mRNA"/>
</dbReference>
<dbReference type="EMBL" id="AB049150">
    <property type="protein sequence ID" value="BAB68387.1"/>
    <property type="molecule type" value="mRNA"/>
</dbReference>
<dbReference type="EMBL" id="AB028974">
    <property type="protein sequence ID" value="BAA83003.2"/>
    <property type="status" value="ALT_SEQ"/>
    <property type="molecule type" value="mRNA"/>
</dbReference>
<dbReference type="EMBL" id="AK299837">
    <property type="protein sequence ID" value="BAG61702.1"/>
    <property type="molecule type" value="mRNA"/>
</dbReference>
<dbReference type="EMBL" id="AC069292">
    <property type="protein sequence ID" value="AAS07484.1"/>
    <property type="molecule type" value="Genomic_DNA"/>
</dbReference>
<dbReference type="EMBL" id="CH471091">
    <property type="protein sequence ID" value="EAW76781.1"/>
    <property type="molecule type" value="Genomic_DNA"/>
</dbReference>
<dbReference type="EMBL" id="BC050659">
    <property type="protein sequence ID" value="AAH50659.1"/>
    <property type="molecule type" value="mRNA"/>
</dbReference>
<dbReference type="CCDS" id="CCDS55126.1">
    <molecule id="Q86TG7-2"/>
</dbReference>
<dbReference type="CCDS" id="CCDS75636.1">
    <molecule id="Q86TG7-5"/>
</dbReference>
<dbReference type="CCDS" id="CCDS75637.1">
    <molecule id="Q86TG7-3"/>
</dbReference>
<dbReference type="RefSeq" id="NP_001035242.1">
    <molecule id="Q86TG7-2"/>
    <property type="nucleotide sequence ID" value="NM_001040152.2"/>
</dbReference>
<dbReference type="RefSeq" id="NP_001165908.1">
    <molecule id="Q86TG7-4"/>
    <property type="nucleotide sequence ID" value="NM_001172437.2"/>
</dbReference>
<dbReference type="RefSeq" id="NP_001165909.1">
    <molecule id="Q86TG7-5"/>
    <property type="nucleotide sequence ID" value="NM_001172438.3"/>
</dbReference>
<dbReference type="RefSeq" id="NP_001171890.1">
    <property type="nucleotide sequence ID" value="NM_001184961.1"/>
</dbReference>
<dbReference type="RefSeq" id="NP_001171891.1">
    <molecule id="Q86TG7-3"/>
    <property type="nucleotide sequence ID" value="NM_001184962.2"/>
</dbReference>
<dbReference type="RefSeq" id="NP_055883.2">
    <molecule id="Q86TG7-1"/>
    <property type="nucleotide sequence ID" value="NM_015068.3"/>
</dbReference>
<dbReference type="PDB" id="7LGA">
    <property type="method" value="X-ray"/>
    <property type="resolution" value="1.90 A"/>
    <property type="chains" value="A/B/D/E=161-238"/>
</dbReference>
<dbReference type="PDBsum" id="7LGA"/>
<dbReference type="SMR" id="Q86TG7"/>
<dbReference type="BioGRID" id="116717">
    <property type="interactions" value="128"/>
</dbReference>
<dbReference type="ELM" id="Q86TG7"/>
<dbReference type="FunCoup" id="Q86TG7">
    <property type="interactions" value="458"/>
</dbReference>
<dbReference type="IntAct" id="Q86TG7">
    <property type="interactions" value="41"/>
</dbReference>
<dbReference type="MINT" id="Q86TG7"/>
<dbReference type="STRING" id="9606.ENSP00000418944"/>
<dbReference type="GlyGen" id="Q86TG7">
    <property type="glycosylation" value="3 sites, 1 N-linked glycan (1 site), 1 O-linked glycan (1 site)"/>
</dbReference>
<dbReference type="iPTMnet" id="Q86TG7"/>
<dbReference type="PhosphoSitePlus" id="Q86TG7"/>
<dbReference type="SwissPalm" id="Q86TG7"/>
<dbReference type="BioMuta" id="PEG10"/>
<dbReference type="DMDM" id="172046699"/>
<dbReference type="jPOST" id="Q86TG7"/>
<dbReference type="MassIVE" id="Q86TG7"/>
<dbReference type="PaxDb" id="9606-ENSP00000418944"/>
<dbReference type="PeptideAtlas" id="Q86TG7"/>
<dbReference type="ProteomicsDB" id="69693">
    <molecule id="Q86TG7-1"/>
</dbReference>
<dbReference type="ProteomicsDB" id="69694">
    <molecule id="Q86TG7-2"/>
</dbReference>
<dbReference type="Pumba" id="Q86TG7"/>
<dbReference type="Antibodypedia" id="30119">
    <property type="antibodies" value="400 antibodies from 34 providers"/>
</dbReference>
<dbReference type="DNASU" id="23089"/>
<dbReference type="Ensembl" id="ENST00000482108.1">
    <molecule id="Q86TG7-2"/>
    <property type="protein sequence ID" value="ENSP00000417587.1"/>
    <property type="gene ID" value="ENSG00000242265.6"/>
</dbReference>
<dbReference type="Ensembl" id="ENST00000488574.5">
    <molecule id="Q86TG7-5"/>
    <property type="protein sequence ID" value="ENSP00000418944.2"/>
    <property type="gene ID" value="ENSG00000242265.6"/>
</dbReference>
<dbReference type="Ensembl" id="ENST00000615790.5">
    <molecule id="Q86TG7-3"/>
    <property type="protein sequence ID" value="ENSP00000482653.2"/>
    <property type="gene ID" value="ENSG00000242265.6"/>
</dbReference>
<dbReference type="GeneID" id="23089"/>
<dbReference type="KEGG" id="hsa:23089"/>
<dbReference type="UCSC" id="uc011kie.3">
    <property type="organism name" value="human"/>
</dbReference>
<dbReference type="UCSC" id="uc064flv.1">
    <molecule id="Q86TG7-1"/>
    <property type="organism name" value="human"/>
</dbReference>
<dbReference type="AGR" id="HGNC:14005"/>
<dbReference type="CTD" id="23089"/>
<dbReference type="DisGeNET" id="23089"/>
<dbReference type="GeneCards" id="PEG10"/>
<dbReference type="HGNC" id="HGNC:14005">
    <property type="gene designation" value="PEG10"/>
</dbReference>
<dbReference type="HPA" id="ENSG00000242265">
    <property type="expression patterns" value="Tissue enhanced (adrenal gland, placenta)"/>
</dbReference>
<dbReference type="MIM" id="609810">
    <property type="type" value="gene"/>
</dbReference>
<dbReference type="neXtProt" id="NX_Q86TG7"/>
<dbReference type="OpenTargets" id="ENSG00000242265"/>
<dbReference type="PharmGKB" id="PA33170"/>
<dbReference type="VEuPathDB" id="HostDB:ENSG00000242265"/>
<dbReference type="eggNOG" id="ENOG502S3G3">
    <property type="taxonomic scope" value="Eukaryota"/>
</dbReference>
<dbReference type="GeneTree" id="ENSGT00950000183173"/>
<dbReference type="HOGENOM" id="CLU_000384_20_1_1"/>
<dbReference type="InParanoid" id="Q86TG7"/>
<dbReference type="OrthoDB" id="9445845at2759"/>
<dbReference type="PAN-GO" id="Q86TG7">
    <property type="GO annotations" value="1 GO annotation based on evolutionary models"/>
</dbReference>
<dbReference type="PhylomeDB" id="Q86TG7"/>
<dbReference type="TreeFam" id="TF335133"/>
<dbReference type="PathwayCommons" id="Q86TG7"/>
<dbReference type="SignaLink" id="Q86TG7"/>
<dbReference type="BioGRID-ORCS" id="23089">
    <property type="hits" value="12 hits in 1150 CRISPR screens"/>
</dbReference>
<dbReference type="CD-CODE" id="232F8A39">
    <property type="entry name" value="P-body"/>
</dbReference>
<dbReference type="CD-CODE" id="DEE660B4">
    <property type="entry name" value="Stress granule"/>
</dbReference>
<dbReference type="ChiTaRS" id="PEG10">
    <property type="organism name" value="human"/>
</dbReference>
<dbReference type="GeneWiki" id="PEG10"/>
<dbReference type="GenomeRNAi" id="23089"/>
<dbReference type="Pharos" id="Q86TG7">
    <property type="development level" value="Tbio"/>
</dbReference>
<dbReference type="PRO" id="PR:Q86TG7"/>
<dbReference type="Proteomes" id="UP000005640">
    <property type="component" value="Chromosome 7"/>
</dbReference>
<dbReference type="RNAct" id="Q86TG7">
    <property type="molecule type" value="protein"/>
</dbReference>
<dbReference type="Bgee" id="ENSG00000242265">
    <property type="expression patterns" value="Expressed in adrenal tissue and 194 other cell types or tissues"/>
</dbReference>
<dbReference type="ExpressionAtlas" id="Q86TG7">
    <property type="expression patterns" value="baseline and differential"/>
</dbReference>
<dbReference type="GO" id="GO:0005737">
    <property type="term" value="C:cytoplasm"/>
    <property type="evidence" value="ECO:0000314"/>
    <property type="project" value="HGNC-UCL"/>
</dbReference>
<dbReference type="GO" id="GO:0005829">
    <property type="term" value="C:cytosol"/>
    <property type="evidence" value="ECO:0000314"/>
    <property type="project" value="HPA"/>
</dbReference>
<dbReference type="GO" id="GO:1903561">
    <property type="term" value="C:extracellular vesicle"/>
    <property type="evidence" value="ECO:0000250"/>
    <property type="project" value="UniProtKB"/>
</dbReference>
<dbReference type="GO" id="GO:0016020">
    <property type="term" value="C:membrane"/>
    <property type="evidence" value="ECO:0007669"/>
    <property type="project" value="UniProtKB-KW"/>
</dbReference>
<dbReference type="GO" id="GO:0005654">
    <property type="term" value="C:nucleoplasm"/>
    <property type="evidence" value="ECO:0000314"/>
    <property type="project" value="HPA"/>
</dbReference>
<dbReference type="GO" id="GO:0003677">
    <property type="term" value="F:DNA binding"/>
    <property type="evidence" value="ECO:0007669"/>
    <property type="project" value="UniProtKB-KW"/>
</dbReference>
<dbReference type="GO" id="GO:0003729">
    <property type="term" value="F:mRNA binding"/>
    <property type="evidence" value="ECO:0000250"/>
    <property type="project" value="UniProtKB"/>
</dbReference>
<dbReference type="GO" id="GO:0003723">
    <property type="term" value="F:RNA binding"/>
    <property type="evidence" value="ECO:0007005"/>
    <property type="project" value="UniProtKB"/>
</dbReference>
<dbReference type="GO" id="GO:0008270">
    <property type="term" value="F:zinc ion binding"/>
    <property type="evidence" value="ECO:0007669"/>
    <property type="project" value="UniProtKB-KW"/>
</dbReference>
<dbReference type="GO" id="GO:0006915">
    <property type="term" value="P:apoptotic process"/>
    <property type="evidence" value="ECO:0007669"/>
    <property type="project" value="UniProtKB-KW"/>
</dbReference>
<dbReference type="GO" id="GO:0030154">
    <property type="term" value="P:cell differentiation"/>
    <property type="evidence" value="ECO:0007669"/>
    <property type="project" value="UniProtKB-KW"/>
</dbReference>
<dbReference type="GO" id="GO:0051028">
    <property type="term" value="P:mRNA transport"/>
    <property type="evidence" value="ECO:0000250"/>
    <property type="project" value="UniProtKB"/>
</dbReference>
<dbReference type="GO" id="GO:0030512">
    <property type="term" value="P:negative regulation of transforming growth factor beta receptor signaling pathway"/>
    <property type="evidence" value="ECO:0000314"/>
    <property type="project" value="HGNC-UCL"/>
</dbReference>
<dbReference type="GO" id="GO:0051260">
    <property type="term" value="P:protein homooligomerization"/>
    <property type="evidence" value="ECO:0000250"/>
    <property type="project" value="UniProtKB"/>
</dbReference>
<dbReference type="GO" id="GO:0110077">
    <property type="term" value="P:vesicle-mediated intercellular transport"/>
    <property type="evidence" value="ECO:0000250"/>
    <property type="project" value="UniProtKB"/>
</dbReference>
<dbReference type="GO" id="GO:0075523">
    <property type="term" value="P:viral translational frameshifting"/>
    <property type="evidence" value="ECO:0007669"/>
    <property type="project" value="UniProtKB-KW"/>
</dbReference>
<dbReference type="CDD" id="cd00303">
    <property type="entry name" value="retropepsin_like"/>
    <property type="match status" value="1"/>
</dbReference>
<dbReference type="FunFam" id="3.10.10.10:FF:000006">
    <property type="entry name" value="Paternally expressed 10"/>
    <property type="match status" value="1"/>
</dbReference>
<dbReference type="FunFam" id="2.40.70.10:FF:000054">
    <property type="entry name" value="retrotransposon-derived protein PEG10 isoform 1"/>
    <property type="match status" value="1"/>
</dbReference>
<dbReference type="Gene3D" id="3.30.70.270">
    <property type="match status" value="1"/>
</dbReference>
<dbReference type="Gene3D" id="2.40.70.10">
    <property type="entry name" value="Acid Proteases"/>
    <property type="match status" value="1"/>
</dbReference>
<dbReference type="Gene3D" id="3.10.10.10">
    <property type="entry name" value="HIV Type 1 Reverse Transcriptase, subunit A, domain 1"/>
    <property type="match status" value="1"/>
</dbReference>
<dbReference type="InterPro" id="IPR043502">
    <property type="entry name" value="DNA/RNA_pol_sf"/>
</dbReference>
<dbReference type="InterPro" id="IPR032549">
    <property type="entry name" value="DUF4939"/>
</dbReference>
<dbReference type="InterPro" id="IPR021109">
    <property type="entry name" value="Peptidase_aspartic_dom_sf"/>
</dbReference>
<dbReference type="InterPro" id="IPR043128">
    <property type="entry name" value="Rev_trsase/Diguanyl_cyclase"/>
</dbReference>
<dbReference type="InterPro" id="IPR032567">
    <property type="entry name" value="RTL1-rel"/>
</dbReference>
<dbReference type="InterPro" id="IPR001878">
    <property type="entry name" value="Znf_CCHC"/>
</dbReference>
<dbReference type="InterPro" id="IPR036875">
    <property type="entry name" value="Znf_CCHC_sf"/>
</dbReference>
<dbReference type="PANTHER" id="PTHR15503">
    <property type="entry name" value="LDOC1 RELATED"/>
    <property type="match status" value="1"/>
</dbReference>
<dbReference type="PANTHER" id="PTHR15503:SF31">
    <property type="entry name" value="RETROTRANSPOSON-DERIVED PROTEIN PEG10"/>
    <property type="match status" value="1"/>
</dbReference>
<dbReference type="Pfam" id="PF16297">
    <property type="entry name" value="DUF4939"/>
    <property type="match status" value="1"/>
</dbReference>
<dbReference type="SUPFAM" id="SSF50630">
    <property type="entry name" value="Acid proteases"/>
    <property type="match status" value="1"/>
</dbReference>
<dbReference type="SUPFAM" id="SSF56672">
    <property type="entry name" value="DNA/RNA polymerases"/>
    <property type="match status" value="1"/>
</dbReference>
<dbReference type="SUPFAM" id="SSF57756">
    <property type="entry name" value="Retrovirus zinc finger-like domains"/>
    <property type="match status" value="1"/>
</dbReference>
<dbReference type="PROSITE" id="PS50158">
    <property type="entry name" value="ZF_CCHC"/>
    <property type="match status" value="1"/>
</dbReference>
<accession>Q86TG7</accession>
<accession>B4DSP0</accession>
<accession>Q96A68</accession>
<accession>Q9UPV1</accession>
<feature type="chain" id="PRO_0000323026" description="Retrotransposon-derived protein PEG10">
    <location>
        <begin position="1"/>
        <end position="708"/>
    </location>
</feature>
<feature type="zinc finger region" description="CCHC-type" evidence="3">
    <location>
        <begin position="293"/>
        <end position="310"/>
    </location>
</feature>
<feature type="region of interest" description="Disordered" evidence="4">
    <location>
        <begin position="21"/>
        <end position="74"/>
    </location>
</feature>
<feature type="region of interest" description="Necessary for interaction with ACVRL1" evidence="8">
    <location>
        <begin position="76"/>
        <end position="275"/>
    </location>
</feature>
<feature type="region of interest" description="Disordered" evidence="4">
    <location>
        <begin position="310"/>
        <end position="344"/>
    </location>
</feature>
<feature type="region of interest" description="Disordered" evidence="4">
    <location>
        <begin position="683"/>
        <end position="708"/>
    </location>
</feature>
<feature type="coiled-coil region" evidence="2">
    <location>
        <begin position="1"/>
        <end position="50"/>
    </location>
</feature>
<feature type="compositionally biased region" description="Polar residues" evidence="4">
    <location>
        <begin position="26"/>
        <end position="36"/>
    </location>
</feature>
<feature type="compositionally biased region" description="Basic and acidic residues" evidence="4">
    <location>
        <begin position="37"/>
        <end position="48"/>
    </location>
</feature>
<feature type="modified residue" description="Omega-N-methylarginine" evidence="1">
    <location>
        <position position="507"/>
    </location>
</feature>
<feature type="modified residue" description="Omega-N-methylarginine" evidence="1">
    <location>
        <position position="598"/>
    </location>
</feature>
<feature type="modified residue" description="Omega-N-methylarginine" evidence="1">
    <location>
        <position position="611"/>
    </location>
</feature>
<feature type="cross-link" description="Glycyl lysine isopeptide (Lys-Gly) (interchain with G-Cter in ubiquitin)" evidence="1">
    <location>
        <position position="311"/>
    </location>
</feature>
<feature type="cross-link" description="Glycyl lysine isopeptide (Lys-Gly) (interchain with G-Cter in ubiquitin)" evidence="1">
    <location>
        <position position="314"/>
    </location>
</feature>
<feature type="splice variant" id="VSP_061361" description="In isoform 3.">
    <original>M</original>
    <variation>MGPDCPPPPPPPPPNNNNNNNSKHTGHKSACVPNM</variation>
    <location>
        <position position="1"/>
    </location>
</feature>
<feature type="splice variant" id="VSP_061362" description="In isoform 4 and isoform 5.">
    <original>M</original>
    <variation>MRNKRVLKTKKRRSGRGGQDPGLHPHRSEATAGRSPPTPTVTLGPDCPPPPPPPPPNNNNNNNSKHTGHKSACVPNM</variation>
    <location>
        <position position="1"/>
    </location>
</feature>
<feature type="splice variant" id="VSP_032007" description="In isoform 2, isoform 3 and isoform 5." evidence="27">
    <original>KLPGPA</original>
    <variation>NSPAPL</variation>
    <location>
        <begin position="320"/>
        <end position="325"/>
    </location>
</feature>
<feature type="splice variant" id="VSP_032008" description="In isoform 2, isoform 3 and isoform 5." evidence="27">
    <location>
        <begin position="326"/>
        <end position="708"/>
    </location>
</feature>
<feature type="mutagenesis site" description="Inhibits proteolytic cleavage." evidence="12">
    <original>D</original>
    <variation>A</variation>
    <location>
        <position position="370"/>
    </location>
</feature>
<feature type="helix" evidence="34">
    <location>
        <begin position="161"/>
        <end position="173"/>
    </location>
</feature>
<feature type="helix" evidence="34">
    <location>
        <begin position="181"/>
        <end position="192"/>
    </location>
</feature>
<feature type="helix" evidence="34">
    <location>
        <begin position="199"/>
        <end position="209"/>
    </location>
</feature>
<feature type="helix" evidence="34">
    <location>
        <begin position="212"/>
        <end position="218"/>
    </location>
</feature>
<feature type="helix" evidence="34">
    <location>
        <begin position="227"/>
        <end position="238"/>
    </location>
</feature>
<feature type="modified residue" description="Phosphoserine" evidence="32">
    <location sequence="Q86TG7-2">
        <position position="316"/>
    </location>
</feature>
<feature type="modified residue" description="Phosphoserine" evidence="32 33">
    <location sequence="Q86TG7-2">
        <position position="321"/>
    </location>
</feature>
<keyword id="KW-0002">3D-structure</keyword>
<keyword id="KW-0024">Alternative initiation</keyword>
<keyword id="KW-0053">Apoptosis</keyword>
<keyword id="KW-0175">Coiled coil</keyword>
<keyword id="KW-0963">Cytoplasm</keyword>
<keyword id="KW-0221">Differentiation</keyword>
<keyword id="KW-0238">DNA-binding</keyword>
<keyword id="KW-1017">Isopeptide bond</keyword>
<keyword id="KW-0472">Membrane</keyword>
<keyword id="KW-0479">Metal-binding</keyword>
<keyword id="KW-0488">Methylation</keyword>
<keyword id="KW-0539">Nucleus</keyword>
<keyword id="KW-0597">Phosphoprotein</keyword>
<keyword id="KW-1267">Proteomics identification</keyword>
<keyword id="KW-1185">Reference proteome</keyword>
<keyword id="KW-0688">Ribosomal frameshifting</keyword>
<keyword id="KW-0694">RNA-binding</keyword>
<keyword id="KW-0813">Transport</keyword>
<keyword id="KW-0814">Transposable element</keyword>
<keyword id="KW-0832">Ubl conjugation</keyword>
<keyword id="KW-0862">Zinc</keyword>
<keyword id="KW-0863">Zinc-finger</keyword>
<organism>
    <name type="scientific">Homo sapiens</name>
    <name type="common">Human</name>
    <dbReference type="NCBI Taxonomy" id="9606"/>
    <lineage>
        <taxon>Eukaryota</taxon>
        <taxon>Metazoa</taxon>
        <taxon>Chordata</taxon>
        <taxon>Craniata</taxon>
        <taxon>Vertebrata</taxon>
        <taxon>Euteleostomi</taxon>
        <taxon>Mammalia</taxon>
        <taxon>Eutheria</taxon>
        <taxon>Euarchontoglires</taxon>
        <taxon>Primates</taxon>
        <taxon>Haplorrhini</taxon>
        <taxon>Catarrhini</taxon>
        <taxon>Hominidae</taxon>
        <taxon>Homo</taxon>
    </lineage>
</organism>
<evidence type="ECO:0000250" key="1">
    <source>
        <dbReference type="UniProtKB" id="Q7TN75"/>
    </source>
</evidence>
<evidence type="ECO:0000255" key="2"/>
<evidence type="ECO:0000255" key="3">
    <source>
        <dbReference type="PROSITE-ProRule" id="PRU00047"/>
    </source>
</evidence>
<evidence type="ECO:0000256" key="4">
    <source>
        <dbReference type="SAM" id="MobiDB-lite"/>
    </source>
</evidence>
<evidence type="ECO:0000269" key="5">
    <source>
    </source>
</evidence>
<evidence type="ECO:0000269" key="6">
    <source>
    </source>
</evidence>
<evidence type="ECO:0000269" key="7">
    <source>
    </source>
</evidence>
<evidence type="ECO:0000269" key="8">
    <source>
    </source>
</evidence>
<evidence type="ECO:0000269" key="9">
    <source>
    </source>
</evidence>
<evidence type="ECO:0000269" key="10">
    <source>
    </source>
</evidence>
<evidence type="ECO:0000269" key="11">
    <source>
    </source>
</evidence>
<evidence type="ECO:0000269" key="12">
    <source>
    </source>
</evidence>
<evidence type="ECO:0000269" key="13">
    <source>
    </source>
</evidence>
<evidence type="ECO:0000269" key="14">
    <source>
    </source>
</evidence>
<evidence type="ECO:0000269" key="15">
    <source>
    </source>
</evidence>
<evidence type="ECO:0000269" key="16">
    <source>
    </source>
</evidence>
<evidence type="ECO:0000269" key="17">
    <source>
    </source>
</evidence>
<evidence type="ECO:0000269" key="18">
    <source>
    </source>
</evidence>
<evidence type="ECO:0000269" key="19">
    <source>
    </source>
</evidence>
<evidence type="ECO:0000269" key="20">
    <source>
    </source>
</evidence>
<evidence type="ECO:0000269" key="21">
    <source>
    </source>
</evidence>
<evidence type="ECO:0000303" key="22">
    <source>
    </source>
</evidence>
<evidence type="ECO:0000303" key="23">
    <source>
    </source>
</evidence>
<evidence type="ECO:0000303" key="24">
    <source>
    </source>
</evidence>
<evidence type="ECO:0000303" key="25">
    <source>
    </source>
</evidence>
<evidence type="ECO:0000303" key="26">
    <source ref="2"/>
</evidence>
<evidence type="ECO:0000305" key="27"/>
<evidence type="ECO:0000305" key="28">
    <source>
    </source>
</evidence>
<evidence type="ECO:0000305" key="29">
    <source>
    </source>
</evidence>
<evidence type="ECO:0000312" key="30">
    <source>
        <dbReference type="EMBL" id="BAG61702.1"/>
    </source>
</evidence>
<evidence type="ECO:0000312" key="31">
    <source>
        <dbReference type="HGNC" id="HGNC:14005"/>
    </source>
</evidence>
<evidence type="ECO:0007744" key="32">
    <source>
    </source>
</evidence>
<evidence type="ECO:0007744" key="33">
    <source>
    </source>
</evidence>
<evidence type="ECO:0007829" key="34">
    <source>
        <dbReference type="PDB" id="7LGA"/>
    </source>
</evidence>
<proteinExistence type="evidence at protein level"/>
<comment type="function">
    <text evidence="1 7 8 9 16 17 19 21">Retrotransposon-derived protein that binds its own mRNA and self-assembles into virion-like capsids (PubMed:34413232). Forms virion-like extracellular vesicles that encapsulate their own mRNA and are released from cells, enabling intercellular transfer of PEG10 mRNA (PubMed:34413232). Binds its own mRNA in the 5'-UTR region, in the region near the boundary between the nucleocapsid (NC) and protease (PRO) coding sequences and in the beginning of the 3'-UTR region (PubMed:34413232). Involved in placenta formation: required for trophoblast stem cells differentiation (By similarity). Involved at the immediate early stage of adipocyte differentiation (By similarity). Overexpressed in many cancers and enhances tumor progression: promotes cell proliferation by driving cell cycle progression from G0/G1 (PubMed:12810624, PubMed:16423995, PubMed:26235627, PubMed:28193232). Enhances cancer progression by inhibiting the TGF-beta signaling, possibly via interaction with the TGF-beta receptor ACVRL1 (PubMed:15611116, PubMed:26235627, PubMed:30094509). May bind to the 5'-GCCTGTCTTT-3' DNA sequence of the MB1 domain in the myelin basic protein (MBP) promoter; additional evidences are however required to confirm this result (By similarity).</text>
</comment>
<comment type="subunit">
    <text evidence="1 7 8">Homooligomer; homooligomerizes into virion-like capsids (By similarity). Interacts with ACVRL1 (PubMed:15611116). Interacts with SIAH1 and SIAH2 (PubMed:12810624).</text>
</comment>
<comment type="interaction">
    <interactant intactId="EBI-2858265">
        <id>Q86TG7</id>
    </interactant>
    <interactant intactId="EBI-739580">
        <id>Q13137</id>
        <label>CALCOCO2</label>
    </interactant>
    <organismsDiffer>false</organismsDiffer>
    <experiments>4</experiments>
</comment>
<comment type="interaction">
    <interactant intactId="EBI-2858265">
        <id>Q86TG7</id>
    </interactant>
    <interactant intactId="EBI-740738">
        <id>O95751</id>
        <label>LDOC1</label>
    </interactant>
    <organismsDiffer>false</organismsDiffer>
    <experiments>6</experiments>
</comment>
<comment type="interaction">
    <interactant intactId="EBI-2858265">
        <id>Q86TG7</id>
    </interactant>
    <interactant intactId="EBI-2340947">
        <id>Q8N448</id>
        <label>LNX2</label>
    </interactant>
    <organismsDiffer>false</organismsDiffer>
    <experiments>3</experiments>
</comment>
<comment type="interaction">
    <interactant intactId="EBI-2858265">
        <id>Q86TG7</id>
    </interactant>
    <interactant intactId="EBI-10238588">
        <id>Q17RB0</id>
        <label>RTL8B</label>
    </interactant>
    <organismsDiffer>false</organismsDiffer>
    <experiments>4</experiments>
</comment>
<comment type="interaction">
    <interactant intactId="EBI-2858265">
        <id>Q86TG7</id>
    </interactant>
    <interactant intactId="EBI-10174072">
        <id>A6ZKI3</id>
        <label>RTL8C</label>
    </interactant>
    <organismsDiffer>false</organismsDiffer>
    <experiments>5</experiments>
</comment>
<comment type="interaction">
    <interactant intactId="EBI-2858265">
        <id>Q86TG7</id>
    </interactant>
    <interactant intactId="EBI-747107">
        <id>Q8IUQ4</id>
        <label>SIAH1</label>
    </interactant>
    <organismsDiffer>false</organismsDiffer>
    <experiments>3</experiments>
</comment>
<comment type="interaction">
    <interactant intactId="EBI-2858265">
        <id>Q86TG7</id>
    </interactant>
    <interactant intactId="EBI-74615">
        <id>Q9H0E2</id>
        <label>TOLLIP</label>
    </interactant>
    <organismsDiffer>false</organismsDiffer>
    <experiments>2</experiments>
</comment>
<comment type="interaction">
    <interactant intactId="EBI-6259410">
        <id>Q86TG7-2</id>
    </interactant>
    <interactant intactId="EBI-371876">
        <id>Q9NQT4</id>
        <label>EXOSC5</label>
    </interactant>
    <organismsDiffer>false</organismsDiffer>
    <experiments>3</experiments>
</comment>
<comment type="interaction">
    <interactant intactId="EBI-6259410">
        <id>Q86TG7-2</id>
    </interactant>
    <interactant intactId="EBI-740738">
        <id>O95751</id>
        <label>LDOC1</label>
    </interactant>
    <organismsDiffer>false</organismsDiffer>
    <experiments>4</experiments>
</comment>
<comment type="interaction">
    <interactant intactId="EBI-6259410">
        <id>Q86TG7-2</id>
    </interactant>
    <interactant intactId="EBI-11984839">
        <id>Q96QF0-7</id>
        <label>RAB3IP</label>
    </interactant>
    <organismsDiffer>false</organismsDiffer>
    <experiments>3</experiments>
</comment>
<comment type="interaction">
    <interactant intactId="EBI-6259410">
        <id>Q86TG7-2</id>
    </interactant>
    <interactant intactId="EBI-741643">
        <id>Q9BWD3</id>
        <label>RTL8A</label>
    </interactant>
    <organismsDiffer>false</organismsDiffer>
    <experiments>8</experiments>
</comment>
<comment type="interaction">
    <interactant intactId="EBI-6259410">
        <id>Q86TG7-2</id>
    </interactant>
    <interactant intactId="EBI-10238588">
        <id>Q17RB0</id>
        <label>RTL8B</label>
    </interactant>
    <organismsDiffer>false</organismsDiffer>
    <experiments>11</experiments>
</comment>
<comment type="interaction">
    <interactant intactId="EBI-6259410">
        <id>Q86TG7-2</id>
    </interactant>
    <interactant intactId="EBI-10174072">
        <id>A6ZKI3</id>
        <label>RTL8C</label>
    </interactant>
    <organismsDiffer>false</organismsDiffer>
    <experiments>10</experiments>
</comment>
<comment type="subcellular location">
    <subcellularLocation>
        <location evidence="21">Extracellular vesicle membrane</location>
    </subcellularLocation>
    <subcellularLocation>
        <location evidence="7 8 9 11">Cytoplasm</location>
    </subcellularLocation>
    <subcellularLocation>
        <location evidence="7">Nucleus</location>
    </subcellularLocation>
    <text evidence="7 21">Forms virion-like extracellular vesicles that are released from cells (PubMed:34413232). Detected predominantly in the cytoplasm of breast and prostate carcinomas, in hepatocellular carcinoma (HCC) and B-cell chronic lymphocytic leukemia (B-CLL) cells and in the Hep-G2 cell line (PubMed:12810624).</text>
</comment>
<comment type="alternative products">
    <event type="alternative initiation"/>
    <event type="ribosomal frameshifting"/>
    <isoform>
        <id>Q86TG7-1</id>
        <name>1</name>
        <name evidence="25">RF1/RF2</name>
        <sequence type="displayed"/>
    </isoform>
    <isoform>
        <id>Q86TG7-2</id>
        <name>2</name>
        <name evidence="25">RF1</name>
        <sequence type="described" ref="VSP_032007 VSP_032008"/>
    </isoform>
    <isoform>
        <id>Q86TG7-3</id>
        <name>3</name>
        <sequence type="described" ref="VSP_061361 VSP_032007 VSP_032008"/>
    </isoform>
    <isoform>
        <id>Q86TG7-4</id>
        <name>4</name>
        <sequence type="described" ref="VSP_061362"/>
    </isoform>
    <isoform>
        <id>Q86TG7-5</id>
        <name>5</name>
        <sequence type="described" ref="VSP_061362 VSP_032007 VSP_032008"/>
    </isoform>
</comment>
<comment type="tissue specificity">
    <text evidence="5 7 8 9 11">Expressed in the cytotrophoblast layer but not in the overlying syncytiotrophoblast of the placenta. Expressed in prostate and breast carcinomas but not in normal breast and prostate epithelial cells. Expressed in the Hep-G2 cell line (at protein level). Expressed in brain, liver, spleen, kidney, thymus, lung, ovary, testis, reactive lymph node, skeletal muscle, adipose tissue and placenta. Expressed in pancreatic and hepatocellular carcinomas (HCC).</text>
</comment>
<comment type="developmental stage">
    <text evidence="6 12">Expressed in placenta during the first trimester of gestation (at protein level). In placenta, down-regulated at early hypoxic phase, and highly activated at 11-12 week of gestation.</text>
</comment>
<comment type="induction">
    <text evidence="9 10 13 15 16 17 18">Expression is directly regulated by E2F1 and E2F4, which bind to its promoter and direct its expression (PubMed:17050006, PubMed:18625225, PubMed:28193232, PubMed:28992046). Up-regulated by MYC (PubMed:16423995). Strongly overepressed in a number of tumors, such has hepatocellular carcinoma (HCC), pancreatic or neuroendocrine prostate cancers (PubMed:20362226, PubMed:26235627, PubMed:28193232).</text>
</comment>
<comment type="domain">
    <text evidence="20 21">The protein is evolutionarily related to retrotransposon Gag proteins: it contains the capsid (CA) and nucleocapsid (NC) subdomains of gag.</text>
</comment>
<comment type="domain">
    <molecule>Isoform 1</molecule>
    <text evidence="21">In addition to the capsid (CA) and nucleocapsid (NC) subdomains of gag proteins, this isoform contains subdomains of pol, namely a protease (PRO) domain and a predicted reverse transcriptase (RT)-like domain.</text>
</comment>
<comment type="PTM">
    <molecule>Isoform 1</molecule>
    <text evidence="12">Undergoes proteolytic cleavage.</text>
</comment>
<comment type="biotechnology">
    <text evidence="21">Can be reprogrammed to form virion-like capsids that deliver engineered cargo mRNAs bearing RNA signals from PEG10 5'- and 3'-UTR into target cells.</text>
</comment>
<comment type="miscellaneous">
    <text evidence="5">The PEG10 locus is imprinted, giving rise to paternally expressed proteins.</text>
</comment>
<comment type="miscellaneous">
    <molecule>Isoform 1</molecule>
    <text evidence="12">Produced by a -1 ribosomal frameshifting due to a slippery site occurring between the codons for Gly-319 and Lys-320 (PubMed:17942406). The ribosomal frameshifting efficiency yield up to 66% of isoform 1 compared to isoform 2 (PubMed:17942406).</text>
</comment>
<comment type="miscellaneous">
    <molecule>Isoform 2</molecule>
    <text evidence="12">Produced by conventional translation.</text>
</comment>
<comment type="miscellaneous">
    <molecule>Isoform 3</molecule>
    <text evidence="14">Produced by alternative initiation (PubMed:20084274). Translation initiates from a non-AUG codon (CUG codon) (PubMed:20084274).</text>
</comment>
<comment type="miscellaneous">
    <molecule>Isoform 4</molecule>
    <text evidence="14">Produced by alternative initiation and ribosomal frameshifting (PubMed:20084274). Produced by a -1 ribosomal frameshifting due to a slippery site occurring between the codons for Gly-395 and Lys-396 (PubMed:20084274). Translation initiates from a non-AUG codon (CUG codon) (PubMed:20084274).</text>
</comment>
<comment type="miscellaneous">
    <molecule>Isoform 5</molecule>
    <text evidence="27">Produced by alternative initiation (Probable). Translation initiates from a non-AUG codon (CUG codon) (Probable).</text>
</comment>
<comment type="caution">
    <text evidence="28 29">Was reported to be activated by androgen receptor agonist dihydrotestosterone (DHT) in hepatic cancer cells (HCC), resulting in HCC growth and apoptotic resistance. However, this study was later retracted.</text>
</comment>
<comment type="sequence caution" evidence="27">
    <conflict type="erroneous translation">
        <sequence resource="EMBL-CDS" id="BAA83003"/>
    </conflict>
    <text>Wrong choice of frame.</text>
</comment>
<comment type="online information" name="Atlas of Genetics and Cytogenetics in Oncology and Haematology">
    <link uri="https://atlasgeneticsoncology.org/gene/44104/PEG10"/>
</comment>
<comment type="online information" name="Protein Spotlight">
    <link uri="https://www.proteinspotlight.org/back_issues/245/"/>
    <text>I'll borrow that, thank you - Issue 245 of March 2022</text>
</comment>
<gene>
    <name evidence="23 31" type="primary">PEG10</name>
    <name evidence="1" type="synonym">EDR</name>
    <name evidence="22" type="synonym">KIAA1051e</name>
    <name type="synonym">MAR2</name>
    <name evidence="1" type="synonym">MART2</name>
    <name evidence="26" type="synonym">MEF3L1</name>
    <name type="synonym">RGAG3</name>
</gene>
<sequence>MTERRRDELSEEINNLREKVMKQSEENNNLQSQVQKLTEENTTLREQVEPTPEDEDDDIELRGAAAAAAPPPPIEEECPEDLPEKFDGNPDMLAPFMAQCQIFMEKSTRDFSVDRVRVCFVTSMMTGRAARWASAKLERSHYLMHNYPAFMMEMKHVFEDPQRREVAKRKIRRLRQGMGSVIDYSNAFQMIAQDLDWNEPALIDQYHEGLSDHIQEELSHLEVAKSLSALIGQCIHIERRLARAAAARKPRSPPRALVLPHIASHHQVDPTEPVGGARMRLTQEEKERRRKLNLCLYCGTGGHYADNCPAKASKSSPAGKLPGPAVEGPSATGPEIIRSPQDDASSPHLQVMLQIHLPGRHTLFVRAMIDSGASGNFIDHEYVAQNGIPLRIKDWPILVEAIDGRPIASGPVVHETHDLIVDLGDHREVLSFDVTQSPFFPVVLGVRWLSTHDPNITWSTRSIVFDSEYCRYHCRMYSPIPPSLPPPAPQPPLYYPVDGYRVYQPVRYYYVQNVYTPVDEHVYPDHRLVDPHIEMIPGAHSIPSGHVYSLSEPEMAALRDFVARNVKDGLITPTIAPNGAQVLQVKRGWKLQVSYDCRAPNNFTIQNQYPRLSIPNLEDQAHLATYTEFVPQIPGYQTYPTYAAYPTYPVGFAWYPVGRDGQGRSLYVPVMITWNPHWYRQPPVPQYPPPQPPPPPPPPPPPPSYSTL</sequence>